<name>PSBE_POPAL</name>
<evidence type="ECO:0000255" key="1">
    <source>
        <dbReference type="HAMAP-Rule" id="MF_00642"/>
    </source>
</evidence>
<accession>Q14FE0</accession>
<organism>
    <name type="scientific">Populus alba</name>
    <name type="common">White poplar</name>
    <dbReference type="NCBI Taxonomy" id="43335"/>
    <lineage>
        <taxon>Eukaryota</taxon>
        <taxon>Viridiplantae</taxon>
        <taxon>Streptophyta</taxon>
        <taxon>Embryophyta</taxon>
        <taxon>Tracheophyta</taxon>
        <taxon>Spermatophyta</taxon>
        <taxon>Magnoliopsida</taxon>
        <taxon>eudicotyledons</taxon>
        <taxon>Gunneridae</taxon>
        <taxon>Pentapetalae</taxon>
        <taxon>rosids</taxon>
        <taxon>fabids</taxon>
        <taxon>Malpighiales</taxon>
        <taxon>Salicaceae</taxon>
        <taxon>Saliceae</taxon>
        <taxon>Populus</taxon>
    </lineage>
</organism>
<protein>
    <recommendedName>
        <fullName evidence="1">Cytochrome b559 subunit alpha</fullName>
    </recommendedName>
    <alternativeName>
        <fullName evidence="1">PSII reaction center subunit V</fullName>
    </alternativeName>
</protein>
<feature type="chain" id="PRO_0000275716" description="Cytochrome b559 subunit alpha">
    <location>
        <begin position="1"/>
        <end position="83"/>
    </location>
</feature>
<feature type="transmembrane region" description="Helical" evidence="1">
    <location>
        <begin position="21"/>
        <end position="35"/>
    </location>
</feature>
<feature type="binding site" description="axial binding residue" evidence="1">
    <location>
        <position position="23"/>
    </location>
    <ligand>
        <name>heme</name>
        <dbReference type="ChEBI" id="CHEBI:30413"/>
        <note>ligand shared with beta subunit</note>
    </ligand>
    <ligandPart>
        <name>Fe</name>
        <dbReference type="ChEBI" id="CHEBI:18248"/>
    </ligandPart>
</feature>
<keyword id="KW-0150">Chloroplast</keyword>
<keyword id="KW-0249">Electron transport</keyword>
<keyword id="KW-0349">Heme</keyword>
<keyword id="KW-0408">Iron</keyword>
<keyword id="KW-0472">Membrane</keyword>
<keyword id="KW-0479">Metal-binding</keyword>
<keyword id="KW-0602">Photosynthesis</keyword>
<keyword id="KW-0604">Photosystem II</keyword>
<keyword id="KW-0934">Plastid</keyword>
<keyword id="KW-0793">Thylakoid</keyword>
<keyword id="KW-0812">Transmembrane</keyword>
<keyword id="KW-1133">Transmembrane helix</keyword>
<keyword id="KW-0813">Transport</keyword>
<gene>
    <name evidence="1" type="primary">psbE</name>
</gene>
<reference key="1">
    <citation type="submission" date="2005-03" db="EMBL/GenBank/DDBJ databases">
        <title>Complete structure of the chloroplast genome of Populus alba.</title>
        <authorList>
            <person name="Okumura S."/>
            <person name="Yamashita A."/>
            <person name="Kanamoto H."/>
            <person name="Hattori M."/>
            <person name="Takase H."/>
            <person name="Tomizawa K."/>
        </authorList>
    </citation>
    <scope>NUCLEOTIDE SEQUENCE [LARGE SCALE GENOMIC DNA]</scope>
</reference>
<comment type="function">
    <text evidence="1">This b-type cytochrome is tightly associated with the reaction center of photosystem II (PSII). PSII is a light-driven water:plastoquinone oxidoreductase that uses light energy to abstract electrons from H(2)O, generating O(2) and a proton gradient subsequently used for ATP formation. It consists of a core antenna complex that captures photons, and an electron transfer chain that converts photonic excitation into a charge separation.</text>
</comment>
<comment type="cofactor">
    <cofactor evidence="1">
        <name>heme b</name>
        <dbReference type="ChEBI" id="CHEBI:60344"/>
    </cofactor>
    <text evidence="1">With its partner (PsbF) binds heme. PSII binds additional chlorophylls, carotenoids and specific lipids.</text>
</comment>
<comment type="subunit">
    <text evidence="1">Heterodimer of an alpha subunit and a beta subunit. PSII is composed of 1 copy each of membrane proteins PsbA, PsbB, PsbC, PsbD, PsbE, PsbF, PsbH, PsbI, PsbJ, PsbK, PsbL, PsbM, PsbT, PsbX, PsbY, PsbZ, Psb30/Ycf12, at least 3 peripheral proteins of the oxygen-evolving complex and a large number of cofactors. It forms dimeric complexes.</text>
</comment>
<comment type="subcellular location">
    <subcellularLocation>
        <location evidence="1">Plastid</location>
        <location evidence="1">Chloroplast thylakoid membrane</location>
        <topology evidence="1">Single-pass membrane protein</topology>
    </subcellularLocation>
</comment>
<comment type="similarity">
    <text evidence="1">Belongs to the PsbE/PsbF family.</text>
</comment>
<dbReference type="EMBL" id="AP008956">
    <property type="protein sequence ID" value="BAE97222.1"/>
    <property type="molecule type" value="Genomic_DNA"/>
</dbReference>
<dbReference type="RefSeq" id="YP_665575.1">
    <property type="nucleotide sequence ID" value="NC_008235.1"/>
</dbReference>
<dbReference type="SMR" id="Q14FE0"/>
<dbReference type="GeneID" id="4178162"/>
<dbReference type="KEGG" id="palz:4178162"/>
<dbReference type="OrthoDB" id="518at3646"/>
<dbReference type="GO" id="GO:0009535">
    <property type="term" value="C:chloroplast thylakoid membrane"/>
    <property type="evidence" value="ECO:0007669"/>
    <property type="project" value="UniProtKB-SubCell"/>
</dbReference>
<dbReference type="GO" id="GO:0009539">
    <property type="term" value="C:photosystem II reaction center"/>
    <property type="evidence" value="ECO:0007669"/>
    <property type="project" value="InterPro"/>
</dbReference>
<dbReference type="GO" id="GO:0009055">
    <property type="term" value="F:electron transfer activity"/>
    <property type="evidence" value="ECO:0007669"/>
    <property type="project" value="UniProtKB-UniRule"/>
</dbReference>
<dbReference type="GO" id="GO:0020037">
    <property type="term" value="F:heme binding"/>
    <property type="evidence" value="ECO:0007669"/>
    <property type="project" value="InterPro"/>
</dbReference>
<dbReference type="GO" id="GO:0005506">
    <property type="term" value="F:iron ion binding"/>
    <property type="evidence" value="ECO:0007669"/>
    <property type="project" value="UniProtKB-UniRule"/>
</dbReference>
<dbReference type="GO" id="GO:0009767">
    <property type="term" value="P:photosynthetic electron transport chain"/>
    <property type="evidence" value="ECO:0007669"/>
    <property type="project" value="InterPro"/>
</dbReference>
<dbReference type="Gene3D" id="1.20.5.860">
    <property type="entry name" value="Photosystem II cytochrome b559, alpha subunit"/>
    <property type="match status" value="1"/>
</dbReference>
<dbReference type="HAMAP" id="MF_00642">
    <property type="entry name" value="PSII_PsbE"/>
    <property type="match status" value="1"/>
</dbReference>
<dbReference type="InterPro" id="IPR006217">
    <property type="entry name" value="PSII_cyt_b559_asu"/>
</dbReference>
<dbReference type="InterPro" id="IPR037025">
    <property type="entry name" value="PSII_cyt_b559_asu_sf"/>
</dbReference>
<dbReference type="InterPro" id="IPR006216">
    <property type="entry name" value="PSII_cyt_b559_CS"/>
</dbReference>
<dbReference type="InterPro" id="IPR013081">
    <property type="entry name" value="PSII_cyt_b559_N"/>
</dbReference>
<dbReference type="InterPro" id="IPR013082">
    <property type="entry name" value="PSII_cytb559_asu_lum"/>
</dbReference>
<dbReference type="NCBIfam" id="TIGR01332">
    <property type="entry name" value="cyt_b559_alpha"/>
    <property type="match status" value="1"/>
</dbReference>
<dbReference type="PANTHER" id="PTHR33391">
    <property type="entry name" value="CYTOCHROME B559 SUBUNIT BETA-RELATED"/>
    <property type="match status" value="1"/>
</dbReference>
<dbReference type="PANTHER" id="PTHR33391:SF9">
    <property type="entry name" value="CYTOCHROME B559 SUBUNIT BETA-RELATED"/>
    <property type="match status" value="1"/>
</dbReference>
<dbReference type="Pfam" id="PF00283">
    <property type="entry name" value="Cytochrom_B559"/>
    <property type="match status" value="1"/>
</dbReference>
<dbReference type="Pfam" id="PF00284">
    <property type="entry name" value="Cytochrom_B559a"/>
    <property type="match status" value="1"/>
</dbReference>
<dbReference type="PIRSF" id="PIRSF000036">
    <property type="entry name" value="PsbE"/>
    <property type="match status" value="1"/>
</dbReference>
<dbReference type="SUPFAM" id="SSF161045">
    <property type="entry name" value="Cytochrome b559 subunits"/>
    <property type="match status" value="1"/>
</dbReference>
<dbReference type="PROSITE" id="PS00537">
    <property type="entry name" value="CYTOCHROME_B559"/>
    <property type="match status" value="1"/>
</dbReference>
<sequence>MSGSTGERSFADIITSIRYWVIHSITIPSLFIAGWLFVSTGLAYDVFGSPRPNEYFTESRQGIPLITGRFDPLEQLDEFSRSF</sequence>
<geneLocation type="chloroplast"/>
<proteinExistence type="inferred from homology"/>